<proteinExistence type="evidence at protein level"/>
<reference key="1">
    <citation type="journal article" date="1997" name="Nature">
        <title>The complete genome sequence of the Gram-positive bacterium Bacillus subtilis.</title>
        <authorList>
            <person name="Kunst F."/>
            <person name="Ogasawara N."/>
            <person name="Moszer I."/>
            <person name="Albertini A.M."/>
            <person name="Alloni G."/>
            <person name="Azevedo V."/>
            <person name="Bertero M.G."/>
            <person name="Bessieres P."/>
            <person name="Bolotin A."/>
            <person name="Borchert S."/>
            <person name="Borriss R."/>
            <person name="Boursier L."/>
            <person name="Brans A."/>
            <person name="Braun M."/>
            <person name="Brignell S.C."/>
            <person name="Bron S."/>
            <person name="Brouillet S."/>
            <person name="Bruschi C.V."/>
            <person name="Caldwell B."/>
            <person name="Capuano V."/>
            <person name="Carter N.M."/>
            <person name="Choi S.-K."/>
            <person name="Codani J.-J."/>
            <person name="Connerton I.F."/>
            <person name="Cummings N.J."/>
            <person name="Daniel R.A."/>
            <person name="Denizot F."/>
            <person name="Devine K.M."/>
            <person name="Duesterhoeft A."/>
            <person name="Ehrlich S.D."/>
            <person name="Emmerson P.T."/>
            <person name="Entian K.-D."/>
            <person name="Errington J."/>
            <person name="Fabret C."/>
            <person name="Ferrari E."/>
            <person name="Foulger D."/>
            <person name="Fritz C."/>
            <person name="Fujita M."/>
            <person name="Fujita Y."/>
            <person name="Fuma S."/>
            <person name="Galizzi A."/>
            <person name="Galleron N."/>
            <person name="Ghim S.-Y."/>
            <person name="Glaser P."/>
            <person name="Goffeau A."/>
            <person name="Golightly E.J."/>
            <person name="Grandi G."/>
            <person name="Guiseppi G."/>
            <person name="Guy B.J."/>
            <person name="Haga K."/>
            <person name="Haiech J."/>
            <person name="Harwood C.R."/>
            <person name="Henaut A."/>
            <person name="Hilbert H."/>
            <person name="Holsappel S."/>
            <person name="Hosono S."/>
            <person name="Hullo M.-F."/>
            <person name="Itaya M."/>
            <person name="Jones L.-M."/>
            <person name="Joris B."/>
            <person name="Karamata D."/>
            <person name="Kasahara Y."/>
            <person name="Klaerr-Blanchard M."/>
            <person name="Klein C."/>
            <person name="Kobayashi Y."/>
            <person name="Koetter P."/>
            <person name="Koningstein G."/>
            <person name="Krogh S."/>
            <person name="Kumano M."/>
            <person name="Kurita K."/>
            <person name="Lapidus A."/>
            <person name="Lardinois S."/>
            <person name="Lauber J."/>
            <person name="Lazarevic V."/>
            <person name="Lee S.-M."/>
            <person name="Levine A."/>
            <person name="Liu H."/>
            <person name="Masuda S."/>
            <person name="Mauel C."/>
            <person name="Medigue C."/>
            <person name="Medina N."/>
            <person name="Mellado R.P."/>
            <person name="Mizuno M."/>
            <person name="Moestl D."/>
            <person name="Nakai S."/>
            <person name="Noback M."/>
            <person name="Noone D."/>
            <person name="O'Reilly M."/>
            <person name="Ogawa K."/>
            <person name="Ogiwara A."/>
            <person name="Oudega B."/>
            <person name="Park S.-H."/>
            <person name="Parro V."/>
            <person name="Pohl T.M."/>
            <person name="Portetelle D."/>
            <person name="Porwollik S."/>
            <person name="Prescott A.M."/>
            <person name="Presecan E."/>
            <person name="Pujic P."/>
            <person name="Purnelle B."/>
            <person name="Rapoport G."/>
            <person name="Rey M."/>
            <person name="Reynolds S."/>
            <person name="Rieger M."/>
            <person name="Rivolta C."/>
            <person name="Rocha E."/>
            <person name="Roche B."/>
            <person name="Rose M."/>
            <person name="Sadaie Y."/>
            <person name="Sato T."/>
            <person name="Scanlan E."/>
            <person name="Schleich S."/>
            <person name="Schroeter R."/>
            <person name="Scoffone F."/>
            <person name="Sekiguchi J."/>
            <person name="Sekowska A."/>
            <person name="Seror S.J."/>
            <person name="Serror P."/>
            <person name="Shin B.-S."/>
            <person name="Soldo B."/>
            <person name="Sorokin A."/>
            <person name="Tacconi E."/>
            <person name="Takagi T."/>
            <person name="Takahashi H."/>
            <person name="Takemaru K."/>
            <person name="Takeuchi M."/>
            <person name="Tamakoshi A."/>
            <person name="Tanaka T."/>
            <person name="Terpstra P."/>
            <person name="Tognoni A."/>
            <person name="Tosato V."/>
            <person name="Uchiyama S."/>
            <person name="Vandenbol M."/>
            <person name="Vannier F."/>
            <person name="Vassarotti A."/>
            <person name="Viari A."/>
            <person name="Wambutt R."/>
            <person name="Wedler E."/>
            <person name="Wedler H."/>
            <person name="Weitzenegger T."/>
            <person name="Winters P."/>
            <person name="Wipat A."/>
            <person name="Yamamoto H."/>
            <person name="Yamane K."/>
            <person name="Yasumoto K."/>
            <person name="Yata K."/>
            <person name="Yoshida K."/>
            <person name="Yoshikawa H.-F."/>
            <person name="Zumstein E."/>
            <person name="Yoshikawa H."/>
            <person name="Danchin A."/>
        </authorList>
    </citation>
    <scope>NUCLEOTIDE SEQUENCE [LARGE SCALE GENOMIC DNA]</scope>
    <source>
        <strain>168</strain>
    </source>
</reference>
<reference key="2">
    <citation type="journal article" date="2002" name="Mol. Microbiol.">
        <title>Global analysis of the Bacillus subtilis Fur regulon and the iron starvation stimulon.</title>
        <authorList>
            <person name="Baichoo N."/>
            <person name="Wang T."/>
            <person name="Ye R."/>
            <person name="Helmann J.D."/>
        </authorList>
    </citation>
    <scope>INDUCTION BY FUR</scope>
    <source>
        <strain>168</strain>
    </source>
</reference>
<reference key="3">
    <citation type="journal article" date="2006" name="Mol. Microbiol.">
        <title>Ferri-bacillibactin uptake and hydrolysis in Bacillus subtilis.</title>
        <authorList>
            <person name="Miethke M."/>
            <person name="Klotz O."/>
            <person name="Linne U."/>
            <person name="May J.J."/>
            <person name="Beckering C.L."/>
            <person name="Marahiel M.A."/>
        </authorList>
    </citation>
    <scope>FUNCTION AS AN ESTERASE</scope>
    <scope>KINETIC PARAMETERS</scope>
    <scope>SUBCELLULAR LOCATION</scope>
    <scope>DISRUPTION PHENOTYPE</scope>
    <source>
        <strain>ATCC 21332 / IAM 1213</strain>
    </source>
</reference>
<gene>
    <name type="primary">besA</name>
    <name type="synonym">yuiI</name>
    <name type="ordered locus">BSU32010</name>
</gene>
<sequence length="289" mass="32439">MKEQTTDRTNGGTSNAFTIPGTEVRMMSSRNENRTYHIFISKPSTPPPPAGYPVIYLLDANSVFGTMTEAVRIQGRRPEKTGVIPAVIVGIGYETAEPFSSARHRDFTMPTAQSKLPERPDGREWPEHGGAEGFFRFIEEDLKPEIERDYQIDKKRQTIFGHSLGGLFVLQVLLTKPDAFQTYIAGSPSIHWNKPFILKKTDHFVSLTKKNNQPINILLAAGELEQHHKSRMNDNARELYERLAVLSEQGIRAEFCEFSGEGHISVLPVLVSRALRFALHPDGPHLSMG</sequence>
<evidence type="ECO:0000250" key="1"/>
<evidence type="ECO:0000269" key="2">
    <source>
    </source>
</evidence>
<evidence type="ECO:0000269" key="3">
    <source>
    </source>
</evidence>
<evidence type="ECO:0000305" key="4"/>
<evidence type="ECO:0000305" key="5">
    <source>
    </source>
</evidence>
<accession>O32102</accession>
<feature type="chain" id="PRO_0000389644" description="Ferri-bacillibactin esterase BesA">
    <location>
        <begin position="1"/>
        <end position="289"/>
    </location>
</feature>
<feature type="active site" description="Charge relay system" evidence="1">
    <location>
        <position position="163"/>
    </location>
</feature>
<feature type="active site" description="Charge relay system" evidence="1">
    <location>
        <position position="225"/>
    </location>
</feature>
<feature type="active site" description="Charge relay system" evidence="1">
    <location>
        <position position="263"/>
    </location>
</feature>
<protein>
    <recommendedName>
        <fullName>Ferri-bacillibactin esterase BesA</fullName>
        <ecNumber>3.1.-.-</ecNumber>
    </recommendedName>
    <alternativeName>
        <fullName>Bacillibactin trilactone hydrolase</fullName>
    </alternativeName>
</protein>
<comment type="function">
    <text evidence="3">Catalyzes the hydrolysis of the trilactone cycle of ferri-bacillibactin (ferri-BB) complex, leading to the formation of bacillibactin monomers and to cytosolic iron release, thus making iron available for metabolic use. Can also hydrolyze bacillibactin (BB), however the catalytic efficiency for ferri-BB hydrolysis is much higher than for BB.</text>
</comment>
<comment type="biophysicochemical properties">
    <kinetics>
        <KM evidence="3">0.54 uM for ferri-bacillibactin complex</KM>
        <KM evidence="3">24.4 uM for bacillibactin</KM>
        <KM evidence="3">221 uM for enterobactin</KM>
    </kinetics>
</comment>
<comment type="subcellular location">
    <subcellularLocation>
        <location evidence="5">Cytoplasm</location>
    </subcellularLocation>
</comment>
<comment type="induction">
    <text evidence="2">Repressed by fur in the presence of iron.</text>
</comment>
<comment type="disruption phenotype">
    <text evidence="3">Impaired growth during iron limitation conditions and a strong accumulation of intracellular ferri-bacillibactin.</text>
</comment>
<comment type="similarity">
    <text evidence="4">Belongs to the esterase D family.</text>
</comment>
<keyword id="KW-0963">Cytoplasm</keyword>
<keyword id="KW-0378">Hydrolase</keyword>
<keyword id="KW-1185">Reference proteome</keyword>
<keyword id="KW-0719">Serine esterase</keyword>
<organism>
    <name type="scientific">Bacillus subtilis (strain 168)</name>
    <dbReference type="NCBI Taxonomy" id="224308"/>
    <lineage>
        <taxon>Bacteria</taxon>
        <taxon>Bacillati</taxon>
        <taxon>Bacillota</taxon>
        <taxon>Bacilli</taxon>
        <taxon>Bacillales</taxon>
        <taxon>Bacillaceae</taxon>
        <taxon>Bacillus</taxon>
    </lineage>
</organism>
<name>BESA_BACSU</name>
<dbReference type="EC" id="3.1.-.-"/>
<dbReference type="EMBL" id="AL009126">
    <property type="protein sequence ID" value="CAB15191.2"/>
    <property type="molecule type" value="Genomic_DNA"/>
</dbReference>
<dbReference type="RefSeq" id="NP_391081.2">
    <property type="nucleotide sequence ID" value="NC_000964.3"/>
</dbReference>
<dbReference type="RefSeq" id="WP_003228740.1">
    <property type="nucleotide sequence ID" value="NZ_OZ025638.1"/>
</dbReference>
<dbReference type="SMR" id="O32102"/>
<dbReference type="FunCoup" id="O32102">
    <property type="interactions" value="30"/>
</dbReference>
<dbReference type="STRING" id="224308.BSU32010"/>
<dbReference type="ESTHER" id="bacsu-YUII">
    <property type="family name" value="A85-IroE-IroD-Fes-Yiel"/>
</dbReference>
<dbReference type="PaxDb" id="224308-BSU32010"/>
<dbReference type="EnsemblBacteria" id="CAB15191">
    <property type="protein sequence ID" value="CAB15191"/>
    <property type="gene ID" value="BSU_32010"/>
</dbReference>
<dbReference type="GeneID" id="936592"/>
<dbReference type="KEGG" id="bsu:BSU32010"/>
<dbReference type="PATRIC" id="fig|224308.179.peg.3467"/>
<dbReference type="eggNOG" id="COG2819">
    <property type="taxonomic scope" value="Bacteria"/>
</dbReference>
<dbReference type="InParanoid" id="O32102"/>
<dbReference type="OrthoDB" id="9784036at2"/>
<dbReference type="PhylomeDB" id="O32102"/>
<dbReference type="BioCyc" id="BSUB:BSU32010-MONOMER"/>
<dbReference type="Proteomes" id="UP000001570">
    <property type="component" value="Chromosome"/>
</dbReference>
<dbReference type="GO" id="GO:0005737">
    <property type="term" value="C:cytoplasm"/>
    <property type="evidence" value="ECO:0007669"/>
    <property type="project" value="UniProtKB-SubCell"/>
</dbReference>
<dbReference type="GO" id="GO:0052689">
    <property type="term" value="F:carboxylic ester hydrolase activity"/>
    <property type="evidence" value="ECO:0007669"/>
    <property type="project" value="UniProtKB-KW"/>
</dbReference>
<dbReference type="Gene3D" id="3.40.50.1820">
    <property type="entry name" value="alpha/beta hydrolase"/>
    <property type="match status" value="1"/>
</dbReference>
<dbReference type="InterPro" id="IPR029058">
    <property type="entry name" value="AB_hydrolase_fold"/>
</dbReference>
<dbReference type="InterPro" id="IPR000801">
    <property type="entry name" value="Esterase-like"/>
</dbReference>
<dbReference type="InterPro" id="IPR052558">
    <property type="entry name" value="Siderophore_Hydrolase_D"/>
</dbReference>
<dbReference type="PANTHER" id="PTHR40841">
    <property type="entry name" value="SIDEROPHORE TRIACETYLFUSARININE C ESTERASE"/>
    <property type="match status" value="1"/>
</dbReference>
<dbReference type="PANTHER" id="PTHR40841:SF2">
    <property type="entry name" value="SIDEROPHORE-DEGRADING ESTERASE (EUROFUNG)"/>
    <property type="match status" value="1"/>
</dbReference>
<dbReference type="Pfam" id="PF00756">
    <property type="entry name" value="Esterase"/>
    <property type="match status" value="1"/>
</dbReference>
<dbReference type="SUPFAM" id="SSF53474">
    <property type="entry name" value="alpha/beta-Hydrolases"/>
    <property type="match status" value="1"/>
</dbReference>